<reference key="1">
    <citation type="submission" date="2008-03" db="EMBL/GenBank/DDBJ databases">
        <title>Complete sequence of Thermoproteus neutrophilus V24Sta.</title>
        <authorList>
            <consortium name="US DOE Joint Genome Institute"/>
            <person name="Copeland A."/>
            <person name="Lucas S."/>
            <person name="Lapidus A."/>
            <person name="Glavina del Rio T."/>
            <person name="Dalin E."/>
            <person name="Tice H."/>
            <person name="Bruce D."/>
            <person name="Goodwin L."/>
            <person name="Pitluck S."/>
            <person name="Sims D."/>
            <person name="Brettin T."/>
            <person name="Detter J.C."/>
            <person name="Han C."/>
            <person name="Kuske C.R."/>
            <person name="Schmutz J."/>
            <person name="Larimer F."/>
            <person name="Land M."/>
            <person name="Hauser L."/>
            <person name="Kyrpides N."/>
            <person name="Mikhailova N."/>
            <person name="Biddle J.F."/>
            <person name="Zhang Z."/>
            <person name="Fitz-Gibbon S.T."/>
            <person name="Lowe T.M."/>
            <person name="Saltikov C."/>
            <person name="House C.H."/>
            <person name="Richardson P."/>
        </authorList>
    </citation>
    <scope>NUCLEOTIDE SEQUENCE [LARGE SCALE GENOMIC DNA]</scope>
    <source>
        <strain>DSM 2338 / JCM 9278 / NBRC 100436 / V24Sta</strain>
    </source>
</reference>
<gene>
    <name evidence="1" type="primary">cysS</name>
    <name type="ordered locus">Tneu_0061</name>
</gene>
<evidence type="ECO:0000255" key="1">
    <source>
        <dbReference type="HAMAP-Rule" id="MF_00041"/>
    </source>
</evidence>
<keyword id="KW-0030">Aminoacyl-tRNA synthetase</keyword>
<keyword id="KW-0067">ATP-binding</keyword>
<keyword id="KW-0963">Cytoplasm</keyword>
<keyword id="KW-0436">Ligase</keyword>
<keyword id="KW-0479">Metal-binding</keyword>
<keyword id="KW-0547">Nucleotide-binding</keyword>
<keyword id="KW-0648">Protein biosynthesis</keyword>
<keyword id="KW-0862">Zinc</keyword>
<feature type="chain" id="PRO_1000090880" description="Cysteine--tRNA ligase">
    <location>
        <begin position="1"/>
        <end position="474"/>
    </location>
</feature>
<feature type="short sequence motif" description="'HIGH' region">
    <location>
        <begin position="29"/>
        <end position="39"/>
    </location>
</feature>
<feature type="short sequence motif" description="'KMSKS' region">
    <location>
        <begin position="271"/>
        <end position="275"/>
    </location>
</feature>
<feature type="binding site" evidence="1">
    <location>
        <position position="27"/>
    </location>
    <ligand>
        <name>Zn(2+)</name>
        <dbReference type="ChEBI" id="CHEBI:29105"/>
    </ligand>
</feature>
<feature type="binding site" evidence="1">
    <location>
        <position position="213"/>
    </location>
    <ligand>
        <name>Zn(2+)</name>
        <dbReference type="ChEBI" id="CHEBI:29105"/>
    </ligand>
</feature>
<feature type="binding site" evidence="1">
    <location>
        <position position="238"/>
    </location>
    <ligand>
        <name>Zn(2+)</name>
        <dbReference type="ChEBI" id="CHEBI:29105"/>
    </ligand>
</feature>
<feature type="binding site" evidence="1">
    <location>
        <position position="242"/>
    </location>
    <ligand>
        <name>Zn(2+)</name>
        <dbReference type="ChEBI" id="CHEBI:29105"/>
    </ligand>
</feature>
<feature type="binding site" evidence="1">
    <location>
        <position position="274"/>
    </location>
    <ligand>
        <name>ATP</name>
        <dbReference type="ChEBI" id="CHEBI:30616"/>
    </ligand>
</feature>
<organism>
    <name type="scientific">Pyrobaculum neutrophilum (strain DSM 2338 / JCM 9278 / NBRC 100436 / V24Sta)</name>
    <name type="common">Thermoproteus neutrophilus</name>
    <dbReference type="NCBI Taxonomy" id="444157"/>
    <lineage>
        <taxon>Archaea</taxon>
        <taxon>Thermoproteota</taxon>
        <taxon>Thermoprotei</taxon>
        <taxon>Thermoproteales</taxon>
        <taxon>Thermoproteaceae</taxon>
        <taxon>Pyrobaculum</taxon>
    </lineage>
</organism>
<protein>
    <recommendedName>
        <fullName evidence="1">Cysteine--tRNA ligase</fullName>
        <ecNumber evidence="1">6.1.1.16</ecNumber>
    </recommendedName>
    <alternativeName>
        <fullName evidence="1">Cysteinyl-tRNA synthetase</fullName>
        <shortName evidence="1">CysRS</shortName>
    </alternativeName>
</protein>
<name>SYC_PYRNV</name>
<comment type="catalytic activity">
    <reaction evidence="1">
        <text>tRNA(Cys) + L-cysteine + ATP = L-cysteinyl-tRNA(Cys) + AMP + diphosphate</text>
        <dbReference type="Rhea" id="RHEA:17773"/>
        <dbReference type="Rhea" id="RHEA-COMP:9661"/>
        <dbReference type="Rhea" id="RHEA-COMP:9679"/>
        <dbReference type="ChEBI" id="CHEBI:30616"/>
        <dbReference type="ChEBI" id="CHEBI:33019"/>
        <dbReference type="ChEBI" id="CHEBI:35235"/>
        <dbReference type="ChEBI" id="CHEBI:78442"/>
        <dbReference type="ChEBI" id="CHEBI:78517"/>
        <dbReference type="ChEBI" id="CHEBI:456215"/>
        <dbReference type="EC" id="6.1.1.16"/>
    </reaction>
</comment>
<comment type="cofactor">
    <cofactor evidence="1">
        <name>Zn(2+)</name>
        <dbReference type="ChEBI" id="CHEBI:29105"/>
    </cofactor>
    <text evidence="1">Binds 1 zinc ion per subunit.</text>
</comment>
<comment type="subcellular location">
    <subcellularLocation>
        <location evidence="1">Cytoplasm</location>
    </subcellularLocation>
</comment>
<comment type="similarity">
    <text evidence="1">Belongs to the class-I aminoacyl-tRNA synthetase family.</text>
</comment>
<sequence>MRIYNTATRQVEEFTTYVPRLARGYVCGITPYDHMHVGHGRVYVFFDIFRRYLERLGYEVRLVINFTDIDDKIVNKAREEFGHEAYKRWREVPERYIAEYFEMTRRLYIKPAYAYPKVTENVEDMVKWISTLVEKGYAYVAPDGSVYFEVAKVPNYGVLSRQKIEELIAGARVEPEPGKRNPLDFALWKSWTPGEPWWNSPWCPGRPGWHLECVVMSTKHLGAPFDFHGGGADLIFPHHENEIAIARAYFGVDNFARYWIHVGYLTVRGEKMSKSLGNIITLREVLSKHSGEALRLAYAMSHYRKPMEFTYELLQQAEDMAKTLYTAYDELSQALRDAGEKDQEPIAQEALKYAGAFYGALDDDMSTPEAVQQLYGMARYIISTVLHRVEKISRETALAVLNKYVEMADVLGVLERRQIPKELEEAVKALVETRARLRQERQYQLADYIRQRLAELGVELHDFGPRTYYTYRRA</sequence>
<accession>B1YA45</accession>
<proteinExistence type="inferred from homology"/>
<dbReference type="EC" id="6.1.1.16" evidence="1"/>
<dbReference type="EMBL" id="CP001014">
    <property type="protein sequence ID" value="ACB39019.1"/>
    <property type="molecule type" value="Genomic_DNA"/>
</dbReference>
<dbReference type="RefSeq" id="WP_012349440.1">
    <property type="nucleotide sequence ID" value="NC_010525.1"/>
</dbReference>
<dbReference type="SMR" id="B1YA45"/>
<dbReference type="STRING" id="444157.Tneu_0061"/>
<dbReference type="GeneID" id="6164407"/>
<dbReference type="KEGG" id="tne:Tneu_0061"/>
<dbReference type="eggNOG" id="arCOG00486">
    <property type="taxonomic scope" value="Archaea"/>
</dbReference>
<dbReference type="HOGENOM" id="CLU_013528_0_1_2"/>
<dbReference type="OrthoDB" id="9445at2157"/>
<dbReference type="Proteomes" id="UP000001694">
    <property type="component" value="Chromosome"/>
</dbReference>
<dbReference type="GO" id="GO:0005737">
    <property type="term" value="C:cytoplasm"/>
    <property type="evidence" value="ECO:0007669"/>
    <property type="project" value="UniProtKB-SubCell"/>
</dbReference>
<dbReference type="GO" id="GO:0005524">
    <property type="term" value="F:ATP binding"/>
    <property type="evidence" value="ECO:0007669"/>
    <property type="project" value="UniProtKB-UniRule"/>
</dbReference>
<dbReference type="GO" id="GO:0004817">
    <property type="term" value="F:cysteine-tRNA ligase activity"/>
    <property type="evidence" value="ECO:0007669"/>
    <property type="project" value="UniProtKB-UniRule"/>
</dbReference>
<dbReference type="GO" id="GO:0008270">
    <property type="term" value="F:zinc ion binding"/>
    <property type="evidence" value="ECO:0007669"/>
    <property type="project" value="UniProtKB-UniRule"/>
</dbReference>
<dbReference type="GO" id="GO:0006423">
    <property type="term" value="P:cysteinyl-tRNA aminoacylation"/>
    <property type="evidence" value="ECO:0007669"/>
    <property type="project" value="UniProtKB-UniRule"/>
</dbReference>
<dbReference type="CDD" id="cd00672">
    <property type="entry name" value="CysRS_core"/>
    <property type="match status" value="1"/>
</dbReference>
<dbReference type="FunFam" id="3.40.50.620:FF:000130">
    <property type="entry name" value="Cysteine--tRNA ligase"/>
    <property type="match status" value="1"/>
</dbReference>
<dbReference type="Gene3D" id="1.20.120.1910">
    <property type="entry name" value="Cysteine-tRNA ligase, C-terminal anti-codon recognition domain"/>
    <property type="match status" value="1"/>
</dbReference>
<dbReference type="Gene3D" id="3.40.50.620">
    <property type="entry name" value="HUPs"/>
    <property type="match status" value="1"/>
</dbReference>
<dbReference type="HAMAP" id="MF_00041">
    <property type="entry name" value="Cys_tRNA_synth"/>
    <property type="match status" value="1"/>
</dbReference>
<dbReference type="InterPro" id="IPR015803">
    <property type="entry name" value="Cys-tRNA-ligase"/>
</dbReference>
<dbReference type="InterPro" id="IPR015273">
    <property type="entry name" value="Cys-tRNA-synt_Ia_DALR"/>
</dbReference>
<dbReference type="InterPro" id="IPR024909">
    <property type="entry name" value="Cys-tRNA/MSH_ligase"/>
</dbReference>
<dbReference type="InterPro" id="IPR014729">
    <property type="entry name" value="Rossmann-like_a/b/a_fold"/>
</dbReference>
<dbReference type="InterPro" id="IPR032678">
    <property type="entry name" value="tRNA-synt_1_cat_dom"/>
</dbReference>
<dbReference type="InterPro" id="IPR009080">
    <property type="entry name" value="tRNAsynth_Ia_anticodon-bd"/>
</dbReference>
<dbReference type="NCBIfam" id="TIGR00435">
    <property type="entry name" value="cysS"/>
    <property type="match status" value="1"/>
</dbReference>
<dbReference type="PANTHER" id="PTHR10890:SF3">
    <property type="entry name" value="CYSTEINE--TRNA LIGASE, CYTOPLASMIC"/>
    <property type="match status" value="1"/>
</dbReference>
<dbReference type="PANTHER" id="PTHR10890">
    <property type="entry name" value="CYSTEINYL-TRNA SYNTHETASE"/>
    <property type="match status" value="1"/>
</dbReference>
<dbReference type="Pfam" id="PF09190">
    <property type="entry name" value="DALR_2"/>
    <property type="match status" value="1"/>
</dbReference>
<dbReference type="Pfam" id="PF01406">
    <property type="entry name" value="tRNA-synt_1e"/>
    <property type="match status" value="1"/>
</dbReference>
<dbReference type="PRINTS" id="PR00983">
    <property type="entry name" value="TRNASYNTHCYS"/>
</dbReference>
<dbReference type="SMART" id="SM00840">
    <property type="entry name" value="DALR_2"/>
    <property type="match status" value="1"/>
</dbReference>
<dbReference type="SUPFAM" id="SSF47323">
    <property type="entry name" value="Anticodon-binding domain of a subclass of class I aminoacyl-tRNA synthetases"/>
    <property type="match status" value="1"/>
</dbReference>
<dbReference type="SUPFAM" id="SSF52374">
    <property type="entry name" value="Nucleotidylyl transferase"/>
    <property type="match status" value="1"/>
</dbReference>